<name>MSRQ_XANCB</name>
<proteinExistence type="inferred from homology"/>
<evidence type="ECO:0000255" key="1">
    <source>
        <dbReference type="HAMAP-Rule" id="MF_01207"/>
    </source>
</evidence>
<sequence length="218" mass="24970">MAKKSVSVIAAKTAVHAAVLAPIALLGWQFWQVWQQGSDALGADPVAEIEHRTGLWALRLLLITLAITPLRQLTGQAVLIRFRRMLGLYTFFYASVHLTAYLWLDLRGFWTQIFEEIVKRPYITVGFTAWLLLVPLAITSTQGWMRRLKRNWGRLHMLIYPIGLLAVLHFWWLVKSDIREPALYAGILALLLGWRVWKRLSARRTTARHSAPPPATPR</sequence>
<accession>B0RUW5</accession>
<protein>
    <recommendedName>
        <fullName evidence="1">Protein-methionine-sulfoxide reductase heme-binding subunit MsrQ</fullName>
    </recommendedName>
    <alternativeName>
        <fullName evidence="1">Flavocytochrome MsrQ</fullName>
    </alternativeName>
</protein>
<dbReference type="EMBL" id="AM920689">
    <property type="protein sequence ID" value="CAP52034.1"/>
    <property type="molecule type" value="Genomic_DNA"/>
</dbReference>
<dbReference type="SMR" id="B0RUW5"/>
<dbReference type="KEGG" id="xca:xcc-b100_2673"/>
<dbReference type="HOGENOM" id="CLU_080662_0_1_6"/>
<dbReference type="Proteomes" id="UP000001188">
    <property type="component" value="Chromosome"/>
</dbReference>
<dbReference type="GO" id="GO:0005886">
    <property type="term" value="C:plasma membrane"/>
    <property type="evidence" value="ECO:0007669"/>
    <property type="project" value="UniProtKB-SubCell"/>
</dbReference>
<dbReference type="GO" id="GO:0009055">
    <property type="term" value="F:electron transfer activity"/>
    <property type="evidence" value="ECO:0007669"/>
    <property type="project" value="UniProtKB-UniRule"/>
</dbReference>
<dbReference type="GO" id="GO:0010181">
    <property type="term" value="F:FMN binding"/>
    <property type="evidence" value="ECO:0007669"/>
    <property type="project" value="UniProtKB-UniRule"/>
</dbReference>
<dbReference type="GO" id="GO:0020037">
    <property type="term" value="F:heme binding"/>
    <property type="evidence" value="ECO:0007669"/>
    <property type="project" value="UniProtKB-UniRule"/>
</dbReference>
<dbReference type="GO" id="GO:0046872">
    <property type="term" value="F:metal ion binding"/>
    <property type="evidence" value="ECO:0007669"/>
    <property type="project" value="UniProtKB-KW"/>
</dbReference>
<dbReference type="GO" id="GO:0016679">
    <property type="term" value="F:oxidoreductase activity, acting on diphenols and related substances as donors"/>
    <property type="evidence" value="ECO:0007669"/>
    <property type="project" value="TreeGrafter"/>
</dbReference>
<dbReference type="GO" id="GO:0030091">
    <property type="term" value="P:protein repair"/>
    <property type="evidence" value="ECO:0007669"/>
    <property type="project" value="UniProtKB-UniRule"/>
</dbReference>
<dbReference type="HAMAP" id="MF_01207">
    <property type="entry name" value="MsrQ"/>
    <property type="match status" value="1"/>
</dbReference>
<dbReference type="InterPro" id="IPR013130">
    <property type="entry name" value="Fe3_Rdtase_TM_dom"/>
</dbReference>
<dbReference type="InterPro" id="IPR022837">
    <property type="entry name" value="MsrQ-like"/>
</dbReference>
<dbReference type="NCBIfam" id="NF003835">
    <property type="entry name" value="PRK05419.2-2"/>
    <property type="match status" value="1"/>
</dbReference>
<dbReference type="PANTHER" id="PTHR36964">
    <property type="entry name" value="PROTEIN-METHIONINE-SULFOXIDE REDUCTASE HEME-BINDING SUBUNIT MSRQ"/>
    <property type="match status" value="1"/>
</dbReference>
<dbReference type="PANTHER" id="PTHR36964:SF1">
    <property type="entry name" value="PROTEIN-METHIONINE-SULFOXIDE REDUCTASE HEME-BINDING SUBUNIT MSRQ"/>
    <property type="match status" value="1"/>
</dbReference>
<dbReference type="Pfam" id="PF01794">
    <property type="entry name" value="Ferric_reduct"/>
    <property type="match status" value="1"/>
</dbReference>
<feature type="chain" id="PRO_1000138749" description="Protein-methionine-sulfoxide reductase heme-binding subunit MsrQ">
    <location>
        <begin position="1"/>
        <end position="218"/>
    </location>
</feature>
<feature type="transmembrane region" description="Helical" evidence="1">
    <location>
        <begin position="14"/>
        <end position="34"/>
    </location>
</feature>
<feature type="transmembrane region" description="Helical" evidence="1">
    <location>
        <begin position="60"/>
        <end position="80"/>
    </location>
</feature>
<feature type="transmembrane region" description="Helical" evidence="1">
    <location>
        <begin position="86"/>
        <end position="106"/>
    </location>
</feature>
<feature type="transmembrane region" description="Helical" evidence="1">
    <location>
        <begin position="121"/>
        <end position="141"/>
    </location>
</feature>
<feature type="transmembrane region" description="Helical" evidence="1">
    <location>
        <begin position="155"/>
        <end position="175"/>
    </location>
</feature>
<organism>
    <name type="scientific">Xanthomonas campestris pv. campestris (strain B100)</name>
    <dbReference type="NCBI Taxonomy" id="509169"/>
    <lineage>
        <taxon>Bacteria</taxon>
        <taxon>Pseudomonadati</taxon>
        <taxon>Pseudomonadota</taxon>
        <taxon>Gammaproteobacteria</taxon>
        <taxon>Lysobacterales</taxon>
        <taxon>Lysobacteraceae</taxon>
        <taxon>Xanthomonas</taxon>
    </lineage>
</organism>
<gene>
    <name evidence="1" type="primary">msrQ</name>
    <name type="ordered locus">xcc-b100_2673</name>
</gene>
<comment type="function">
    <text evidence="1">Part of the MsrPQ system that repairs oxidized periplasmic proteins containing methionine sulfoxide residues (Met-O), using respiratory chain electrons. Thus protects these proteins from oxidative-stress damage caused by reactive species of oxygen and chlorine generated by the host defense mechanisms. MsrPQ is essential for the maintenance of envelope integrity under bleach stress, rescuing a wide series of structurally unrelated periplasmic proteins from methionine oxidation. MsrQ provides electrons for reduction to the reductase catalytic subunit MsrP, using the quinone pool of the respiratory chain.</text>
</comment>
<comment type="cofactor">
    <cofactor evidence="1">
        <name>FMN</name>
        <dbReference type="ChEBI" id="CHEBI:58210"/>
    </cofactor>
    <text evidence="1">Binds 1 FMN per subunit.</text>
</comment>
<comment type="cofactor">
    <cofactor evidence="1">
        <name>heme b</name>
        <dbReference type="ChEBI" id="CHEBI:60344"/>
    </cofactor>
    <text evidence="1">Binds 1 heme b (iron(II)-protoporphyrin IX) group per subunit.</text>
</comment>
<comment type="subunit">
    <text evidence="1">Heterodimer of a catalytic subunit (MsrP) and a heme-binding subunit (MsrQ).</text>
</comment>
<comment type="subcellular location">
    <subcellularLocation>
        <location evidence="1">Cell inner membrane</location>
        <topology evidence="1">Multi-pass membrane protein</topology>
    </subcellularLocation>
</comment>
<comment type="similarity">
    <text evidence="1">Belongs to the MsrQ family.</text>
</comment>
<keyword id="KW-0997">Cell inner membrane</keyword>
<keyword id="KW-1003">Cell membrane</keyword>
<keyword id="KW-0249">Electron transport</keyword>
<keyword id="KW-0285">Flavoprotein</keyword>
<keyword id="KW-0288">FMN</keyword>
<keyword id="KW-0349">Heme</keyword>
<keyword id="KW-0408">Iron</keyword>
<keyword id="KW-0472">Membrane</keyword>
<keyword id="KW-0479">Metal-binding</keyword>
<keyword id="KW-0812">Transmembrane</keyword>
<keyword id="KW-1133">Transmembrane helix</keyword>
<keyword id="KW-0813">Transport</keyword>
<reference key="1">
    <citation type="journal article" date="2008" name="J. Biotechnol.">
        <title>The genome of Xanthomonas campestris pv. campestris B100 and its use for the reconstruction of metabolic pathways involved in xanthan biosynthesis.</title>
        <authorList>
            <person name="Vorhoelter F.-J."/>
            <person name="Schneiker S."/>
            <person name="Goesmann A."/>
            <person name="Krause L."/>
            <person name="Bekel T."/>
            <person name="Kaiser O."/>
            <person name="Linke B."/>
            <person name="Patschkowski T."/>
            <person name="Rueckert C."/>
            <person name="Schmid J."/>
            <person name="Sidhu V.K."/>
            <person name="Sieber V."/>
            <person name="Tauch A."/>
            <person name="Watt S.A."/>
            <person name="Weisshaar B."/>
            <person name="Becker A."/>
            <person name="Niehaus K."/>
            <person name="Puehler A."/>
        </authorList>
    </citation>
    <scope>NUCLEOTIDE SEQUENCE [LARGE SCALE GENOMIC DNA]</scope>
    <source>
        <strain>B100</strain>
    </source>
</reference>